<keyword id="KW-0186">Copper</keyword>
<keyword id="KW-0249">Electron transport</keyword>
<keyword id="KW-0460">Magnesium</keyword>
<keyword id="KW-0472">Membrane</keyword>
<keyword id="KW-0479">Metal-binding</keyword>
<keyword id="KW-0496">Mitochondrion</keyword>
<keyword id="KW-0999">Mitochondrion inner membrane</keyword>
<keyword id="KW-0679">Respiratory chain</keyword>
<keyword id="KW-1278">Translocase</keyword>
<keyword id="KW-0812">Transmembrane</keyword>
<keyword id="KW-1133">Transmembrane helix</keyword>
<keyword id="KW-0813">Transport</keyword>
<accession>Q9ZZ51</accession>
<organism>
    <name type="scientific">Squalus acanthias</name>
    <name type="common">Spiny dogfish</name>
    <dbReference type="NCBI Taxonomy" id="7797"/>
    <lineage>
        <taxon>Eukaryota</taxon>
        <taxon>Metazoa</taxon>
        <taxon>Chordata</taxon>
        <taxon>Craniata</taxon>
        <taxon>Vertebrata</taxon>
        <taxon>Chondrichthyes</taxon>
        <taxon>Elasmobranchii</taxon>
        <taxon>Squalomorphii</taxon>
        <taxon>Squaliformes</taxon>
        <taxon>Squalidae</taxon>
        <taxon>Squalus</taxon>
    </lineage>
</organism>
<sequence>MAHPSQLGFQDAASPVMEELLHFHDHTLMIVFLISTLVLYIIMAMVSTKLTNKYILDSQEIEIVWTILPAVILIMIALPSLRILYLMDEINDPHLTIKAMGHQWYWSYEYTDYEDLGFDSYMIQTQDLTPGQFRLLETDHRMVVPMESPIRVLVSAEDVLHSWTVPALGVKMDAVPGRLNQTAFIISRPGVYYGQCSEICGANHSFMPIVVEAVPLEHFESWSSLMLEEA</sequence>
<gene>
    <name type="primary">MT-CO2</name>
    <name type="synonym">COII</name>
    <name type="synonym">COXII</name>
    <name type="synonym">MTCO2</name>
</gene>
<name>COX2_SQUAC</name>
<dbReference type="EC" id="7.1.1.9"/>
<dbReference type="EMBL" id="Y18134">
    <property type="protein sequence ID" value="CAA77052.1"/>
    <property type="molecule type" value="Genomic_DNA"/>
</dbReference>
<dbReference type="PIR" id="T11537">
    <property type="entry name" value="T11537"/>
</dbReference>
<dbReference type="SMR" id="Q9ZZ51"/>
<dbReference type="CTD" id="4513"/>
<dbReference type="GO" id="GO:0005743">
    <property type="term" value="C:mitochondrial inner membrane"/>
    <property type="evidence" value="ECO:0007669"/>
    <property type="project" value="UniProtKB-SubCell"/>
</dbReference>
<dbReference type="GO" id="GO:0045277">
    <property type="term" value="C:respiratory chain complex IV"/>
    <property type="evidence" value="ECO:0000250"/>
    <property type="project" value="UniProtKB"/>
</dbReference>
<dbReference type="GO" id="GO:0005507">
    <property type="term" value="F:copper ion binding"/>
    <property type="evidence" value="ECO:0007669"/>
    <property type="project" value="InterPro"/>
</dbReference>
<dbReference type="GO" id="GO:0004129">
    <property type="term" value="F:cytochrome-c oxidase activity"/>
    <property type="evidence" value="ECO:0007669"/>
    <property type="project" value="UniProtKB-EC"/>
</dbReference>
<dbReference type="GO" id="GO:0042773">
    <property type="term" value="P:ATP synthesis coupled electron transport"/>
    <property type="evidence" value="ECO:0007669"/>
    <property type="project" value="TreeGrafter"/>
</dbReference>
<dbReference type="CDD" id="cd13912">
    <property type="entry name" value="CcO_II_C"/>
    <property type="match status" value="1"/>
</dbReference>
<dbReference type="FunFam" id="1.10.287.90:FF:000001">
    <property type="entry name" value="Cytochrome c oxidase subunit 2"/>
    <property type="match status" value="1"/>
</dbReference>
<dbReference type="FunFam" id="2.60.40.420:FF:000001">
    <property type="entry name" value="Cytochrome c oxidase subunit 2"/>
    <property type="match status" value="1"/>
</dbReference>
<dbReference type="Gene3D" id="1.10.287.90">
    <property type="match status" value="1"/>
</dbReference>
<dbReference type="Gene3D" id="2.60.40.420">
    <property type="entry name" value="Cupredoxins - blue copper proteins"/>
    <property type="match status" value="1"/>
</dbReference>
<dbReference type="InterPro" id="IPR045187">
    <property type="entry name" value="CcO_II"/>
</dbReference>
<dbReference type="InterPro" id="IPR002429">
    <property type="entry name" value="CcO_II-like_C"/>
</dbReference>
<dbReference type="InterPro" id="IPR034210">
    <property type="entry name" value="CcO_II_C"/>
</dbReference>
<dbReference type="InterPro" id="IPR001505">
    <property type="entry name" value="Copper_CuA"/>
</dbReference>
<dbReference type="InterPro" id="IPR008972">
    <property type="entry name" value="Cupredoxin"/>
</dbReference>
<dbReference type="InterPro" id="IPR014222">
    <property type="entry name" value="Cyt_c_oxidase_su2"/>
</dbReference>
<dbReference type="InterPro" id="IPR011759">
    <property type="entry name" value="Cyt_c_oxidase_su2_TM_dom"/>
</dbReference>
<dbReference type="InterPro" id="IPR036257">
    <property type="entry name" value="Cyt_c_oxidase_su2_TM_sf"/>
</dbReference>
<dbReference type="NCBIfam" id="TIGR02866">
    <property type="entry name" value="CoxB"/>
    <property type="match status" value="1"/>
</dbReference>
<dbReference type="PANTHER" id="PTHR22888:SF9">
    <property type="entry name" value="CYTOCHROME C OXIDASE SUBUNIT 2"/>
    <property type="match status" value="1"/>
</dbReference>
<dbReference type="PANTHER" id="PTHR22888">
    <property type="entry name" value="CYTOCHROME C OXIDASE, SUBUNIT II"/>
    <property type="match status" value="1"/>
</dbReference>
<dbReference type="Pfam" id="PF00116">
    <property type="entry name" value="COX2"/>
    <property type="match status" value="1"/>
</dbReference>
<dbReference type="Pfam" id="PF02790">
    <property type="entry name" value="COX2_TM"/>
    <property type="match status" value="1"/>
</dbReference>
<dbReference type="PRINTS" id="PR01166">
    <property type="entry name" value="CYCOXIDASEII"/>
</dbReference>
<dbReference type="SUPFAM" id="SSF49503">
    <property type="entry name" value="Cupredoxins"/>
    <property type="match status" value="1"/>
</dbReference>
<dbReference type="SUPFAM" id="SSF81464">
    <property type="entry name" value="Cytochrome c oxidase subunit II-like, transmembrane region"/>
    <property type="match status" value="1"/>
</dbReference>
<dbReference type="PROSITE" id="PS00078">
    <property type="entry name" value="COX2"/>
    <property type="match status" value="1"/>
</dbReference>
<dbReference type="PROSITE" id="PS50857">
    <property type="entry name" value="COX2_CUA"/>
    <property type="match status" value="1"/>
</dbReference>
<dbReference type="PROSITE" id="PS50999">
    <property type="entry name" value="COX2_TM"/>
    <property type="match status" value="1"/>
</dbReference>
<comment type="function">
    <text evidence="2">Component of the cytochrome c oxidase, the last enzyme in the mitochondrial electron transport chain which drives oxidative phosphorylation. The respiratory chain contains 3 multisubunit complexes succinate dehydrogenase (complex II, CII), ubiquinol-cytochrome c oxidoreductase (cytochrome b-c1 complex, complex III, CIII) and cytochrome c oxidase (complex IV, CIV), that cooperate to transfer electrons derived from NADH and succinate to molecular oxygen, creating an electrochemical gradient over the inner membrane that drives transmembrane transport and the ATP synthase. Cytochrome c oxidase is the component of the respiratory chain that catalyzes the reduction of oxygen to water. Electrons originating from reduced cytochrome c in the intermembrane space (IMS) are transferred via the dinuclear copper A center (CU(A)) of subunit 2 and heme A of subunit 1 to the active site in subunit 1, a binuclear center (BNC) formed by heme A3 and copper B (CU(B)). The BNC reduces molecular oxygen to 2 water molecules using 4 electrons from cytochrome c in the IMS and 4 protons from the mitochondrial matrix.</text>
</comment>
<comment type="catalytic activity">
    <reaction evidence="2">
        <text>4 Fe(II)-[cytochrome c] + O2 + 8 H(+)(in) = 4 Fe(III)-[cytochrome c] + 2 H2O + 4 H(+)(out)</text>
        <dbReference type="Rhea" id="RHEA:11436"/>
        <dbReference type="Rhea" id="RHEA-COMP:10350"/>
        <dbReference type="Rhea" id="RHEA-COMP:14399"/>
        <dbReference type="ChEBI" id="CHEBI:15377"/>
        <dbReference type="ChEBI" id="CHEBI:15378"/>
        <dbReference type="ChEBI" id="CHEBI:15379"/>
        <dbReference type="ChEBI" id="CHEBI:29033"/>
        <dbReference type="ChEBI" id="CHEBI:29034"/>
        <dbReference type="EC" id="7.1.1.9"/>
    </reaction>
    <physiologicalReaction direction="left-to-right" evidence="2">
        <dbReference type="Rhea" id="RHEA:11437"/>
    </physiologicalReaction>
</comment>
<comment type="cofactor">
    <cofactor evidence="3">
        <name>Cu cation</name>
        <dbReference type="ChEBI" id="CHEBI:23378"/>
    </cofactor>
    <text evidence="3">Binds a dinuclear copper A center per subunit.</text>
</comment>
<comment type="subunit">
    <text evidence="1 3">Component of the cytochrome c oxidase (complex IV, CIV), a multisubunit enzyme composed of 14 subunits. The complex is composed of a catalytic core of 3 subunits MT-CO1, MT-CO2 and MT-CO3, encoded in the mitochondrial DNA, and 11 supernumerary subunits COX4I, COX5A, COX5B, COX6A, COX6B, COX6C, COX7A, COX7B, COX7C, COX8 and NDUFA4, which are encoded in the nuclear genome. The complex exists as a monomer or a dimer and forms supercomplexes (SCs) in the inner mitochondrial membrane with NADH-ubiquinone oxidoreductase (complex I, CI) and ubiquinol-cytochrome c oxidoreductase (cytochrome b-c1 complex, complex III, CIII), resulting in different assemblies (supercomplex SCI(1)III(2)IV(1) and megacomplex MCI(2)III(2)IV(2)) (By similarity). Found in a complex with TMEM177, COA6, COX18, COX20, SCO1 and SCO2. Interacts with TMEM177 in a COX20-dependent manner. Interacts with COX20. Interacts with COX16 (By similarity).</text>
</comment>
<comment type="subcellular location">
    <subcellularLocation>
        <location evidence="3">Mitochondrion inner membrane</location>
        <topology evidence="3">Multi-pass membrane protein</topology>
    </subcellularLocation>
</comment>
<comment type="similarity">
    <text evidence="4">Belongs to the cytochrome c oxidase subunit 2 family.</text>
</comment>
<evidence type="ECO:0000250" key="1">
    <source>
        <dbReference type="UniProtKB" id="P00403"/>
    </source>
</evidence>
<evidence type="ECO:0000250" key="2">
    <source>
        <dbReference type="UniProtKB" id="P00410"/>
    </source>
</evidence>
<evidence type="ECO:0000250" key="3">
    <source>
        <dbReference type="UniProtKB" id="P68530"/>
    </source>
</evidence>
<evidence type="ECO:0000305" key="4"/>
<proteinExistence type="inferred from homology"/>
<geneLocation type="mitochondrion"/>
<protein>
    <recommendedName>
        <fullName>Cytochrome c oxidase subunit 2</fullName>
        <ecNumber>7.1.1.9</ecNumber>
    </recommendedName>
    <alternativeName>
        <fullName>Cytochrome c oxidase polypeptide II</fullName>
    </alternativeName>
</protein>
<feature type="chain" id="PRO_0000183695" description="Cytochrome c oxidase subunit 2">
    <location>
        <begin position="1"/>
        <end position="230"/>
    </location>
</feature>
<feature type="topological domain" description="Mitochondrial intermembrane" evidence="3">
    <location>
        <begin position="1"/>
        <end position="14"/>
    </location>
</feature>
<feature type="transmembrane region" description="Helical; Name=I" evidence="3">
    <location>
        <begin position="15"/>
        <end position="45"/>
    </location>
</feature>
<feature type="topological domain" description="Mitochondrial matrix" evidence="3">
    <location>
        <begin position="46"/>
        <end position="59"/>
    </location>
</feature>
<feature type="transmembrane region" description="Helical; Name=II" evidence="3">
    <location>
        <begin position="60"/>
        <end position="87"/>
    </location>
</feature>
<feature type="topological domain" description="Mitochondrial intermembrane" evidence="3">
    <location>
        <begin position="88"/>
        <end position="230"/>
    </location>
</feature>
<feature type="binding site" evidence="3">
    <location>
        <position position="161"/>
    </location>
    <ligand>
        <name>Cu cation</name>
        <dbReference type="ChEBI" id="CHEBI:23378"/>
        <label>A1</label>
    </ligand>
</feature>
<feature type="binding site" evidence="3">
    <location>
        <position position="196"/>
    </location>
    <ligand>
        <name>Cu cation</name>
        <dbReference type="ChEBI" id="CHEBI:23378"/>
        <label>A1</label>
    </ligand>
</feature>
<feature type="binding site" evidence="3">
    <location>
        <position position="196"/>
    </location>
    <ligand>
        <name>Cu cation</name>
        <dbReference type="ChEBI" id="CHEBI:23378"/>
        <label>A2</label>
    </ligand>
</feature>
<feature type="binding site" evidence="3">
    <location>
        <position position="198"/>
    </location>
    <ligand>
        <name>Cu cation</name>
        <dbReference type="ChEBI" id="CHEBI:23378"/>
        <label>A2</label>
    </ligand>
</feature>
<feature type="binding site" evidence="3">
    <location>
        <position position="198"/>
    </location>
    <ligand>
        <name>Mg(2+)</name>
        <dbReference type="ChEBI" id="CHEBI:18420"/>
        <note>ligand shared with MT-CO1</note>
    </ligand>
</feature>
<feature type="binding site" evidence="3">
    <location>
        <position position="200"/>
    </location>
    <ligand>
        <name>Cu cation</name>
        <dbReference type="ChEBI" id="CHEBI:23378"/>
        <label>A1</label>
    </ligand>
</feature>
<feature type="binding site" evidence="3">
    <location>
        <position position="200"/>
    </location>
    <ligand>
        <name>Cu cation</name>
        <dbReference type="ChEBI" id="CHEBI:23378"/>
        <label>A2</label>
    </ligand>
</feature>
<feature type="binding site" evidence="3">
    <location>
        <position position="204"/>
    </location>
    <ligand>
        <name>Cu cation</name>
        <dbReference type="ChEBI" id="CHEBI:23378"/>
        <label>A2</label>
    </ligand>
</feature>
<feature type="binding site" evidence="3">
    <location>
        <position position="207"/>
    </location>
    <ligand>
        <name>Cu cation</name>
        <dbReference type="ChEBI" id="CHEBI:23378"/>
        <label>A1</label>
    </ligand>
</feature>
<reference key="1">
    <citation type="journal article" date="1999" name="J. Mol. Evol.">
        <title>Phylogenetic studies of complete mitochondrial DNA molecules place cartilaginous fishes within the tree of bony fishes.</title>
        <authorList>
            <person name="Rasmussen A.S."/>
            <person name="Arnason U."/>
        </authorList>
    </citation>
    <scope>NUCLEOTIDE SEQUENCE [GENOMIC DNA]</scope>
</reference>